<sequence>MVKTVYITGYKSFELNIYKDDAPEVYYLKQFIAHKLKHLLDEGLEWVLIQGQMGIELWSAEVVIELKKDFPDIKLGIITPFIGHTQRWNDKNQAKYTNIIQQADFTESIHHTEYMGAYQFKQADQFMLDHTDYTILIYDDEQEASPKYFKAMLVEFMEKTNYTCDIVTFDELTDFINDLQWSQDQSFE</sequence>
<evidence type="ECO:0000255" key="1">
    <source>
        <dbReference type="HAMAP-Rule" id="MF_01575"/>
    </source>
</evidence>
<accession>Q8CSJ2</accession>
<organism>
    <name type="scientific">Staphylococcus epidermidis (strain ATCC 12228 / FDA PCI 1200)</name>
    <dbReference type="NCBI Taxonomy" id="176280"/>
    <lineage>
        <taxon>Bacteria</taxon>
        <taxon>Bacillati</taxon>
        <taxon>Bacillota</taxon>
        <taxon>Bacilli</taxon>
        <taxon>Bacillales</taxon>
        <taxon>Staphylococcaceae</taxon>
        <taxon>Staphylococcus</taxon>
    </lineage>
</organism>
<gene>
    <name type="ordered locus">SE_1135</name>
</gene>
<reference key="1">
    <citation type="journal article" date="2003" name="Mol. Microbiol.">
        <title>Genome-based analysis of virulence genes in a non-biofilm-forming Staphylococcus epidermidis strain (ATCC 12228).</title>
        <authorList>
            <person name="Zhang Y.-Q."/>
            <person name="Ren S.-X."/>
            <person name="Li H.-L."/>
            <person name="Wang Y.-X."/>
            <person name="Fu G."/>
            <person name="Yang J."/>
            <person name="Qin Z.-Q."/>
            <person name="Miao Y.-G."/>
            <person name="Wang W.-Y."/>
            <person name="Chen R.-S."/>
            <person name="Shen Y."/>
            <person name="Chen Z."/>
            <person name="Yuan Z.-H."/>
            <person name="Zhao G.-P."/>
            <person name="Qu D."/>
            <person name="Danchin A."/>
            <person name="Wen Y.-M."/>
        </authorList>
    </citation>
    <scope>NUCLEOTIDE SEQUENCE [LARGE SCALE GENOMIC DNA]</scope>
    <source>
        <strain>ATCC 12228 / FDA PCI 1200</strain>
    </source>
</reference>
<proteinExistence type="inferred from homology"/>
<comment type="similarity">
    <text evidence="1">Belongs to the UPF0398 family.</text>
</comment>
<name>Y1135_STAES</name>
<protein>
    <recommendedName>
        <fullName evidence="1">UPF0398 protein SE_1135</fullName>
    </recommendedName>
</protein>
<feature type="chain" id="PRO_0000267177" description="UPF0398 protein SE_1135">
    <location>
        <begin position="1"/>
        <end position="188"/>
    </location>
</feature>
<dbReference type="EMBL" id="AE015929">
    <property type="protein sequence ID" value="AAO04732.1"/>
    <property type="molecule type" value="Genomic_DNA"/>
</dbReference>
<dbReference type="RefSeq" id="NP_764690.1">
    <property type="nucleotide sequence ID" value="NC_004461.1"/>
</dbReference>
<dbReference type="RefSeq" id="WP_001831285.1">
    <property type="nucleotide sequence ID" value="NZ_WBME01000088.1"/>
</dbReference>
<dbReference type="SMR" id="Q8CSJ2"/>
<dbReference type="KEGG" id="sep:SE_1135"/>
<dbReference type="PATRIC" id="fig|176280.10.peg.1108"/>
<dbReference type="eggNOG" id="COG4474">
    <property type="taxonomic scope" value="Bacteria"/>
</dbReference>
<dbReference type="HOGENOM" id="CLU_105319_0_0_9"/>
<dbReference type="OrthoDB" id="2301957at2"/>
<dbReference type="Proteomes" id="UP000001411">
    <property type="component" value="Chromosome"/>
</dbReference>
<dbReference type="Gene3D" id="3.40.50.450">
    <property type="match status" value="1"/>
</dbReference>
<dbReference type="HAMAP" id="MF_01575">
    <property type="entry name" value="UPF0398"/>
    <property type="match status" value="1"/>
</dbReference>
<dbReference type="InterPro" id="IPR010697">
    <property type="entry name" value="YspA"/>
</dbReference>
<dbReference type="NCBIfam" id="NF010181">
    <property type="entry name" value="PRK13660.1"/>
    <property type="match status" value="1"/>
</dbReference>
<dbReference type="PANTHER" id="PTHR38440:SF1">
    <property type="entry name" value="UPF0398 PROTEIN SPR0331"/>
    <property type="match status" value="1"/>
</dbReference>
<dbReference type="PANTHER" id="PTHR38440">
    <property type="entry name" value="UPF0398 PROTEIN YPSA"/>
    <property type="match status" value="1"/>
</dbReference>
<dbReference type="Pfam" id="PF06908">
    <property type="entry name" value="YpsA"/>
    <property type="match status" value="1"/>
</dbReference>
<dbReference type="PIRSF" id="PIRSF021290">
    <property type="entry name" value="DUF1273"/>
    <property type="match status" value="1"/>
</dbReference>
<dbReference type="SUPFAM" id="SSF102405">
    <property type="entry name" value="MCP/YpsA-like"/>
    <property type="match status" value="1"/>
</dbReference>